<evidence type="ECO:0000255" key="1"/>
<evidence type="ECO:0000256" key="2">
    <source>
        <dbReference type="SAM" id="MobiDB-lite"/>
    </source>
</evidence>
<evidence type="ECO:0000269" key="3">
    <source>
    </source>
</evidence>
<evidence type="ECO:0000269" key="4">
    <source>
    </source>
</evidence>
<evidence type="ECO:0000303" key="5">
    <source>
    </source>
</evidence>
<evidence type="ECO:0000303" key="6">
    <source ref="2"/>
</evidence>
<evidence type="ECO:0000305" key="7"/>
<evidence type="ECO:0007744" key="8">
    <source>
        <dbReference type="PDB" id="3JD5"/>
    </source>
</evidence>
<evidence type="ECO:0007829" key="9">
    <source>
        <dbReference type="PDB" id="6NEQ"/>
    </source>
</evidence>
<comment type="subunit">
    <text evidence="3 4">Component of the mitochondrial ribosome small subunit (28S) which comprises a 12S rRNA and about 30 distinct proteins.</text>
</comment>
<comment type="subcellular location">
    <subcellularLocation>
        <location evidence="3 4">Mitochondrion</location>
    </subcellularLocation>
</comment>
<comment type="alternative products">
    <event type="alternative splicing"/>
    <isoform>
        <id>Q58DQ5-1</id>
        <name>1</name>
        <sequence type="displayed"/>
    </isoform>
    <isoform>
        <id>Q58DQ5-2</id>
        <name>2</name>
        <sequence type="described" ref="VSP_019341"/>
    </isoform>
    <isoform>
        <id>Q58DQ5-3</id>
        <name>3</name>
        <sequence type="described" ref="VSP_021750"/>
    </isoform>
</comment>
<comment type="similarity">
    <text evidence="7">Belongs to the universal ribosomal protein uS9 family.</text>
</comment>
<feature type="transit peptide" description="Mitochondrion" evidence="1">
    <location>
        <begin position="1"/>
        <end status="unknown"/>
    </location>
</feature>
<feature type="chain" id="PRO_0000030654" description="Small ribosomal subunit protein uS9m">
    <location>
        <begin status="unknown"/>
        <end position="396"/>
    </location>
</feature>
<feature type="region of interest" description="Disordered" evidence="2">
    <location>
        <begin position="374"/>
        <end position="396"/>
    </location>
</feature>
<feature type="splice variant" id="VSP_021750" description="In isoform 3." evidence="6">
    <location>
        <begin position="311"/>
        <end position="396"/>
    </location>
</feature>
<feature type="splice variant" id="VSP_019341" description="In isoform 2." evidence="5">
    <original>AGLLTTDPRVRERKKPGQEGARRKFTWKKR</original>
    <variation>GTASLSFCEP</variation>
    <location>
        <begin position="367"/>
        <end position="396"/>
    </location>
</feature>
<feature type="sequence conflict" description="In Ref. 1; AAX31368." evidence="7" ref="1">
    <original>T</original>
    <variation>K</variation>
    <location>
        <position position="58"/>
    </location>
</feature>
<feature type="helix" evidence="9">
    <location>
        <begin position="71"/>
        <end position="92"/>
    </location>
</feature>
<feature type="turn" evidence="9">
    <location>
        <begin position="96"/>
        <end position="98"/>
    </location>
</feature>
<feature type="helix" evidence="9">
    <location>
        <begin position="101"/>
        <end position="111"/>
    </location>
</feature>
<feature type="strand" evidence="9">
    <location>
        <begin position="119"/>
        <end position="122"/>
    </location>
</feature>
<feature type="helix" evidence="9">
    <location>
        <begin position="128"/>
        <end position="131"/>
    </location>
</feature>
<feature type="strand" evidence="9">
    <location>
        <begin position="146"/>
        <end position="148"/>
    </location>
</feature>
<feature type="helix" evidence="9">
    <location>
        <begin position="151"/>
        <end position="153"/>
    </location>
</feature>
<feature type="helix" evidence="9">
    <location>
        <begin position="156"/>
        <end position="177"/>
    </location>
</feature>
<feature type="helix" evidence="9">
    <location>
        <begin position="202"/>
        <end position="208"/>
    </location>
</feature>
<feature type="strand" evidence="9">
    <location>
        <begin position="209"/>
        <end position="211"/>
    </location>
</feature>
<feature type="helix" evidence="9">
    <location>
        <begin position="215"/>
        <end position="229"/>
    </location>
</feature>
<feature type="helix" evidence="9">
    <location>
        <begin position="236"/>
        <end position="242"/>
    </location>
</feature>
<feature type="strand" evidence="9">
    <location>
        <begin position="263"/>
        <end position="265"/>
    </location>
</feature>
<feature type="strand" evidence="9">
    <location>
        <begin position="268"/>
        <end position="278"/>
    </location>
</feature>
<feature type="strand" evidence="9">
    <location>
        <begin position="280"/>
        <end position="288"/>
    </location>
</feature>
<feature type="helix" evidence="9">
    <location>
        <begin position="300"/>
        <end position="303"/>
    </location>
</feature>
<feature type="helix" evidence="9">
    <location>
        <begin position="307"/>
        <end position="320"/>
    </location>
</feature>
<feature type="strand" evidence="9">
    <location>
        <begin position="323"/>
        <end position="325"/>
    </location>
</feature>
<feature type="strand" evidence="9">
    <location>
        <begin position="331"/>
        <end position="335"/>
    </location>
</feature>
<feature type="helix" evidence="9">
    <location>
        <begin position="338"/>
        <end position="352"/>
    </location>
</feature>
<feature type="turn" evidence="9">
    <location>
        <begin position="353"/>
        <end position="355"/>
    </location>
</feature>
<feature type="helix" evidence="9">
    <location>
        <begin position="358"/>
        <end position="365"/>
    </location>
</feature>
<feature type="turn" evidence="9">
    <location>
        <begin position="366"/>
        <end position="368"/>
    </location>
</feature>
<feature type="strand" evidence="9">
    <location>
        <begin position="369"/>
        <end position="371"/>
    </location>
</feature>
<feature type="strand" evidence="9">
    <location>
        <begin position="384"/>
        <end position="388"/>
    </location>
</feature>
<name>RT09_BOVIN</name>
<proteinExistence type="evidence at protein level"/>
<gene>
    <name type="primary">MRPS9</name>
</gene>
<accession>Q58DQ5</accession>
<accession>P82676</accession>
<accession>Q0V8L9</accession>
<accession>Q32LH0</accession>
<accession>Q5BIN8</accession>
<organism>
    <name type="scientific">Bos taurus</name>
    <name type="common">Bovine</name>
    <dbReference type="NCBI Taxonomy" id="9913"/>
    <lineage>
        <taxon>Eukaryota</taxon>
        <taxon>Metazoa</taxon>
        <taxon>Chordata</taxon>
        <taxon>Craniata</taxon>
        <taxon>Vertebrata</taxon>
        <taxon>Euteleostomi</taxon>
        <taxon>Mammalia</taxon>
        <taxon>Eutheria</taxon>
        <taxon>Laurasiatheria</taxon>
        <taxon>Artiodactyla</taxon>
        <taxon>Ruminantia</taxon>
        <taxon>Pecora</taxon>
        <taxon>Bovidae</taxon>
        <taxon>Bovinae</taxon>
        <taxon>Bos</taxon>
    </lineage>
</organism>
<dbReference type="EMBL" id="BT021186">
    <property type="protein sequence ID" value="AAX31368.1"/>
    <property type="molecule type" value="mRNA"/>
</dbReference>
<dbReference type="EMBL" id="BT021542">
    <property type="protein sequence ID" value="AAX46389.1"/>
    <property type="molecule type" value="mRNA"/>
</dbReference>
<dbReference type="EMBL" id="BT026199">
    <property type="protein sequence ID" value="ABG67038.1"/>
    <property type="molecule type" value="mRNA"/>
</dbReference>
<dbReference type="EMBL" id="BC109583">
    <property type="protein sequence ID" value="AAI09584.1"/>
    <property type="molecule type" value="mRNA"/>
</dbReference>
<dbReference type="RefSeq" id="NP_001030409.1">
    <molecule id="Q58DQ5-2"/>
    <property type="nucleotide sequence ID" value="NM_001035332.1"/>
</dbReference>
<dbReference type="RefSeq" id="XP_005212500.1">
    <molecule id="Q58DQ5-1"/>
    <property type="nucleotide sequence ID" value="XM_005212443.5"/>
</dbReference>
<dbReference type="PDB" id="3JD5">
    <property type="method" value="EM"/>
    <property type="resolution" value="7.00 A"/>
    <property type="chains" value="I=1-396"/>
</dbReference>
<dbReference type="PDB" id="6NEQ">
    <property type="method" value="EM"/>
    <property type="resolution" value="3.32 A"/>
    <property type="chains" value="I=1-396"/>
</dbReference>
<dbReference type="PDB" id="6NF8">
    <property type="method" value="EM"/>
    <property type="resolution" value="3.48 A"/>
    <property type="chains" value="I=1-396"/>
</dbReference>
<dbReference type="PDBsum" id="3JD5"/>
<dbReference type="PDBsum" id="6NEQ"/>
<dbReference type="PDBsum" id="6NF8"/>
<dbReference type="EMDB" id="EMD-9358"/>
<dbReference type="EMDB" id="EMD-9362"/>
<dbReference type="SMR" id="Q58DQ5"/>
<dbReference type="CORUM" id="Q58DQ5"/>
<dbReference type="FunCoup" id="Q58DQ5">
    <property type="interactions" value="1493"/>
</dbReference>
<dbReference type="IntAct" id="Q58DQ5">
    <property type="interactions" value="1"/>
</dbReference>
<dbReference type="STRING" id="9913.ENSBTAP00000066078"/>
<dbReference type="iPTMnet" id="Q58DQ5"/>
<dbReference type="PaxDb" id="9913-ENSBTAP00000008093"/>
<dbReference type="GeneID" id="519302"/>
<dbReference type="KEGG" id="bta:519302"/>
<dbReference type="CTD" id="64965"/>
<dbReference type="VEuPathDB" id="HostDB:ENSBTAG00000006150"/>
<dbReference type="eggNOG" id="KOG1697">
    <property type="taxonomic scope" value="Eukaryota"/>
</dbReference>
<dbReference type="HOGENOM" id="CLU_060546_1_0_1"/>
<dbReference type="InParanoid" id="Q58DQ5"/>
<dbReference type="OMA" id="HHFLFYT"/>
<dbReference type="OrthoDB" id="10254627at2759"/>
<dbReference type="TreeFam" id="TF106154"/>
<dbReference type="Reactome" id="R-BTA-5389840">
    <property type="pathway name" value="Mitochondrial translation elongation"/>
</dbReference>
<dbReference type="Reactome" id="R-BTA-5419276">
    <property type="pathway name" value="Mitochondrial translation termination"/>
</dbReference>
<dbReference type="Proteomes" id="UP000009136">
    <property type="component" value="Chromosome 11"/>
</dbReference>
<dbReference type="Bgee" id="ENSBTAG00000006150">
    <property type="expression patterns" value="Expressed in triceps brachii and 106 other cell types or tissues"/>
</dbReference>
<dbReference type="GO" id="GO:0005743">
    <property type="term" value="C:mitochondrial inner membrane"/>
    <property type="evidence" value="ECO:0000304"/>
    <property type="project" value="Reactome"/>
</dbReference>
<dbReference type="GO" id="GO:0005763">
    <property type="term" value="C:mitochondrial small ribosomal subunit"/>
    <property type="evidence" value="ECO:0000314"/>
    <property type="project" value="UniProtKB"/>
</dbReference>
<dbReference type="GO" id="GO:0003723">
    <property type="term" value="F:RNA binding"/>
    <property type="evidence" value="ECO:0000318"/>
    <property type="project" value="GO_Central"/>
</dbReference>
<dbReference type="GO" id="GO:0003735">
    <property type="term" value="F:structural constituent of ribosome"/>
    <property type="evidence" value="ECO:0000318"/>
    <property type="project" value="GO_Central"/>
</dbReference>
<dbReference type="GO" id="GO:0006412">
    <property type="term" value="P:translation"/>
    <property type="evidence" value="ECO:0007669"/>
    <property type="project" value="InterPro"/>
</dbReference>
<dbReference type="FunFam" id="3.30.230.10:FF:000035">
    <property type="entry name" value="28S ribosomal protein S9, mitochondrial"/>
    <property type="match status" value="1"/>
</dbReference>
<dbReference type="Gene3D" id="3.30.230.10">
    <property type="match status" value="1"/>
</dbReference>
<dbReference type="InterPro" id="IPR020568">
    <property type="entry name" value="Ribosomal_Su5_D2-typ_SF"/>
</dbReference>
<dbReference type="InterPro" id="IPR000754">
    <property type="entry name" value="Ribosomal_uS9"/>
</dbReference>
<dbReference type="InterPro" id="IPR023035">
    <property type="entry name" value="Ribosomal_uS9_bac/plastid"/>
</dbReference>
<dbReference type="InterPro" id="IPR020574">
    <property type="entry name" value="Ribosomal_uS9_CS"/>
</dbReference>
<dbReference type="InterPro" id="IPR014721">
    <property type="entry name" value="Ribsml_uS5_D2-typ_fold_subgr"/>
</dbReference>
<dbReference type="NCBIfam" id="NF001099">
    <property type="entry name" value="PRK00132.1"/>
    <property type="match status" value="1"/>
</dbReference>
<dbReference type="PANTHER" id="PTHR21569">
    <property type="entry name" value="RIBOSOMAL PROTEIN S9"/>
    <property type="match status" value="1"/>
</dbReference>
<dbReference type="PANTHER" id="PTHR21569:SF1">
    <property type="entry name" value="SMALL RIBOSOMAL SUBUNIT PROTEIN US9M"/>
    <property type="match status" value="1"/>
</dbReference>
<dbReference type="Pfam" id="PF00380">
    <property type="entry name" value="Ribosomal_S9"/>
    <property type="match status" value="1"/>
</dbReference>
<dbReference type="SUPFAM" id="SSF54211">
    <property type="entry name" value="Ribosomal protein S5 domain 2-like"/>
    <property type="match status" value="1"/>
</dbReference>
<dbReference type="PROSITE" id="PS00360">
    <property type="entry name" value="RIBOSOMAL_S9"/>
    <property type="match status" value="1"/>
</dbReference>
<sequence length="396" mass="45231">MAAPSVSCGAAVPYRLFLAGRVSFAREQGLWKAAASGLQTGTRCQILRLKHSPAVTTTKNVAALRRESYTVDFIKKQIEEFNIGKRHLANMMGEDPETFTQEDVDRAITYLFPSGLFEKRARPIMKHPEEIFPKQRAVQWGEDGRPFHFLFYTGKQSYYSLMHEAYGKVLHAEERQDQLRAKGLFSEKSKSKDLIGSRWLIKEELEEMLVEKLSDQDYAQFIRLLERLSALPCDAAEEEFVGRFRRTVTVQSKKHLIEPLQYDEQGMAFSTGQGKRKTANAEAVVYGHGSGKIEINGVDYLLYFPVTQDREQLMFPFHFLDRLGKHDVTCTVSGGGRSSQAGAIRLAMSRALCSFITEDEVEWMRQAGLLTTDPRVRERKKPGQEGARRKFTWKKR</sequence>
<protein>
    <recommendedName>
        <fullName evidence="7">Small ribosomal subunit protein uS9m</fullName>
    </recommendedName>
    <alternativeName>
        <fullName>28S ribosomal protein S9, mitochondrial</fullName>
        <shortName>MRP-S9</shortName>
        <shortName>S9mt</shortName>
    </alternativeName>
</protein>
<reference key="1">
    <citation type="journal article" date="2005" name="BMC Genomics">
        <title>Characterization of 954 bovine full-CDS cDNA sequences.</title>
        <authorList>
            <person name="Harhay G.P."/>
            <person name="Sonstegard T.S."/>
            <person name="Keele J.W."/>
            <person name="Heaton M.P."/>
            <person name="Clawson M.L."/>
            <person name="Snelling W.M."/>
            <person name="Wiedmann R.T."/>
            <person name="Van Tassell C.P."/>
            <person name="Smith T.P.L."/>
        </authorList>
    </citation>
    <scope>NUCLEOTIDE SEQUENCE [LARGE SCALE MRNA] (ISOFORMS 1 AND 2)</scope>
</reference>
<reference key="2">
    <citation type="submission" date="2005-11" db="EMBL/GenBank/DDBJ databases">
        <authorList>
            <consortium name="NIH - Mammalian Gene Collection (MGC) project"/>
        </authorList>
    </citation>
    <scope>NUCLEOTIDE SEQUENCE [LARGE SCALE MRNA] (ISOFORM 3)</scope>
    <source>
        <strain>Crossbred X Angus</strain>
        <tissue>Liver</tissue>
    </source>
</reference>
<reference key="3">
    <citation type="journal article" date="2001" name="Protein Sci.">
        <title>Identification of four proteins from the small subunit of the mammalian mitochondrial ribosome using a proteomics approach.</title>
        <authorList>
            <person name="Koc E.C."/>
            <person name="Burkhart W."/>
            <person name="Blackburn K."/>
            <person name="Koc H."/>
            <person name="Moseley A."/>
            <person name="Spremulli L.L."/>
        </authorList>
    </citation>
    <scope>PROTEIN SEQUENCE OF 77-83; 85-119; 135-151; 156-168; 203-212 AND 257-271</scope>
    <scope>SUBUNIT</scope>
    <scope>SUBCELLULAR LOCATION</scope>
    <source>
        <tissue>Liver</tissue>
    </source>
</reference>
<reference evidence="8" key="4">
    <citation type="journal article" date="2014" name="Proc. Natl. Acad. Sci. U.S.A.">
        <title>Cryo-EM structure of the small subunit of the mammalian mitochondrial ribosome.</title>
        <authorList>
            <person name="Kaushal P.S."/>
            <person name="Sharma M.R."/>
            <person name="Booth T.M."/>
            <person name="Haque E.M."/>
            <person name="Tung C.S."/>
            <person name="Sanbonmatsu K.Y."/>
            <person name="Spremulli L.L."/>
            <person name="Agrawal R.K."/>
        </authorList>
    </citation>
    <scope>STRUCTURE BY ELECTRON MICROSCOPY (7.00 ANGSTROMS)</scope>
    <scope>SUBCELLULAR LOCATION</scope>
    <scope>SUBUNIT</scope>
</reference>
<keyword id="KW-0002">3D-structure</keyword>
<keyword id="KW-0025">Alternative splicing</keyword>
<keyword id="KW-0903">Direct protein sequencing</keyword>
<keyword id="KW-0496">Mitochondrion</keyword>
<keyword id="KW-1185">Reference proteome</keyword>
<keyword id="KW-0687">Ribonucleoprotein</keyword>
<keyword id="KW-0689">Ribosomal protein</keyword>
<keyword id="KW-0809">Transit peptide</keyword>